<gene>
    <name evidence="1" type="primary">ilvC</name>
    <name type="ordered locus">Lxx13170</name>
</gene>
<dbReference type="EC" id="1.1.1.86" evidence="1"/>
<dbReference type="EMBL" id="AE016822">
    <property type="protein sequence ID" value="AAT89154.1"/>
    <property type="molecule type" value="Genomic_DNA"/>
</dbReference>
<dbReference type="RefSeq" id="WP_011186148.1">
    <property type="nucleotide sequence ID" value="NC_006087.1"/>
</dbReference>
<dbReference type="SMR" id="Q6AEP2"/>
<dbReference type="STRING" id="281090.Lxx13170"/>
<dbReference type="KEGG" id="lxx:Lxx13170"/>
<dbReference type="eggNOG" id="COG0059">
    <property type="taxonomic scope" value="Bacteria"/>
</dbReference>
<dbReference type="HOGENOM" id="CLU_033821_0_1_11"/>
<dbReference type="UniPathway" id="UPA00047">
    <property type="reaction ID" value="UER00056"/>
</dbReference>
<dbReference type="UniPathway" id="UPA00049">
    <property type="reaction ID" value="UER00060"/>
</dbReference>
<dbReference type="Proteomes" id="UP000001306">
    <property type="component" value="Chromosome"/>
</dbReference>
<dbReference type="GO" id="GO:0005829">
    <property type="term" value="C:cytosol"/>
    <property type="evidence" value="ECO:0007669"/>
    <property type="project" value="TreeGrafter"/>
</dbReference>
<dbReference type="GO" id="GO:0004455">
    <property type="term" value="F:ketol-acid reductoisomerase activity"/>
    <property type="evidence" value="ECO:0007669"/>
    <property type="project" value="UniProtKB-UniRule"/>
</dbReference>
<dbReference type="GO" id="GO:0000287">
    <property type="term" value="F:magnesium ion binding"/>
    <property type="evidence" value="ECO:0007669"/>
    <property type="project" value="UniProtKB-UniRule"/>
</dbReference>
<dbReference type="GO" id="GO:0050661">
    <property type="term" value="F:NADP binding"/>
    <property type="evidence" value="ECO:0007669"/>
    <property type="project" value="InterPro"/>
</dbReference>
<dbReference type="GO" id="GO:0009097">
    <property type="term" value="P:isoleucine biosynthetic process"/>
    <property type="evidence" value="ECO:0007669"/>
    <property type="project" value="UniProtKB-UniRule"/>
</dbReference>
<dbReference type="GO" id="GO:0009099">
    <property type="term" value="P:L-valine biosynthetic process"/>
    <property type="evidence" value="ECO:0007669"/>
    <property type="project" value="UniProtKB-UniRule"/>
</dbReference>
<dbReference type="FunFam" id="3.40.50.720:FF:000023">
    <property type="entry name" value="Ketol-acid reductoisomerase (NADP(+))"/>
    <property type="match status" value="1"/>
</dbReference>
<dbReference type="Gene3D" id="6.10.240.10">
    <property type="match status" value="1"/>
</dbReference>
<dbReference type="Gene3D" id="3.40.50.720">
    <property type="entry name" value="NAD(P)-binding Rossmann-like Domain"/>
    <property type="match status" value="1"/>
</dbReference>
<dbReference type="HAMAP" id="MF_00435">
    <property type="entry name" value="IlvC"/>
    <property type="match status" value="1"/>
</dbReference>
<dbReference type="InterPro" id="IPR008927">
    <property type="entry name" value="6-PGluconate_DH-like_C_sf"/>
</dbReference>
<dbReference type="InterPro" id="IPR013023">
    <property type="entry name" value="KARI"/>
</dbReference>
<dbReference type="InterPro" id="IPR000506">
    <property type="entry name" value="KARI_C"/>
</dbReference>
<dbReference type="InterPro" id="IPR013116">
    <property type="entry name" value="KARI_N"/>
</dbReference>
<dbReference type="InterPro" id="IPR014359">
    <property type="entry name" value="KARI_prok"/>
</dbReference>
<dbReference type="InterPro" id="IPR036291">
    <property type="entry name" value="NAD(P)-bd_dom_sf"/>
</dbReference>
<dbReference type="NCBIfam" id="TIGR00465">
    <property type="entry name" value="ilvC"/>
    <property type="match status" value="1"/>
</dbReference>
<dbReference type="NCBIfam" id="NF004017">
    <property type="entry name" value="PRK05479.1"/>
    <property type="match status" value="1"/>
</dbReference>
<dbReference type="NCBIfam" id="NF009940">
    <property type="entry name" value="PRK13403.1"/>
    <property type="match status" value="1"/>
</dbReference>
<dbReference type="PANTHER" id="PTHR21371">
    <property type="entry name" value="KETOL-ACID REDUCTOISOMERASE, MITOCHONDRIAL"/>
    <property type="match status" value="1"/>
</dbReference>
<dbReference type="PANTHER" id="PTHR21371:SF1">
    <property type="entry name" value="KETOL-ACID REDUCTOISOMERASE, MITOCHONDRIAL"/>
    <property type="match status" value="1"/>
</dbReference>
<dbReference type="Pfam" id="PF01450">
    <property type="entry name" value="KARI_C"/>
    <property type="match status" value="1"/>
</dbReference>
<dbReference type="Pfam" id="PF07991">
    <property type="entry name" value="KARI_N"/>
    <property type="match status" value="1"/>
</dbReference>
<dbReference type="PIRSF" id="PIRSF000116">
    <property type="entry name" value="IlvC_gammaproteo"/>
    <property type="match status" value="1"/>
</dbReference>
<dbReference type="SUPFAM" id="SSF48179">
    <property type="entry name" value="6-phosphogluconate dehydrogenase C-terminal domain-like"/>
    <property type="match status" value="1"/>
</dbReference>
<dbReference type="SUPFAM" id="SSF51735">
    <property type="entry name" value="NAD(P)-binding Rossmann-fold domains"/>
    <property type="match status" value="1"/>
</dbReference>
<dbReference type="PROSITE" id="PS51851">
    <property type="entry name" value="KARI_C"/>
    <property type="match status" value="1"/>
</dbReference>
<dbReference type="PROSITE" id="PS51850">
    <property type="entry name" value="KARI_N"/>
    <property type="match status" value="1"/>
</dbReference>
<reference key="1">
    <citation type="journal article" date="2004" name="Mol. Plant Microbe Interact.">
        <title>The genome sequence of the Gram-positive sugarcane pathogen Leifsonia xyli subsp. xyli.</title>
        <authorList>
            <person name="Monteiro-Vitorello C.B."/>
            <person name="Camargo L.E.A."/>
            <person name="Van Sluys M.A."/>
            <person name="Kitajima J.P."/>
            <person name="Truffi D."/>
            <person name="do Amaral A.M."/>
            <person name="Harakava R."/>
            <person name="de Oliveira J.C.F."/>
            <person name="Wood D."/>
            <person name="de Oliveira M.C."/>
            <person name="Miyaki C.Y."/>
            <person name="Takita M.A."/>
            <person name="da Silva A.C.R."/>
            <person name="Furlan L.R."/>
            <person name="Carraro D.M."/>
            <person name="Camarotte G."/>
            <person name="Almeida N.F. Jr."/>
            <person name="Carrer H."/>
            <person name="Coutinho L.L."/>
            <person name="El-Dorry H.A."/>
            <person name="Ferro M.I.T."/>
            <person name="Gagliardi P.R."/>
            <person name="Giglioti E."/>
            <person name="Goldman M.H.S."/>
            <person name="Goldman G.H."/>
            <person name="Kimura E.T."/>
            <person name="Ferro E.S."/>
            <person name="Kuramae E.E."/>
            <person name="Lemos E.G.M."/>
            <person name="Lemos M.V.F."/>
            <person name="Mauro S.M.Z."/>
            <person name="Machado M.A."/>
            <person name="Marino C.L."/>
            <person name="Menck C.F."/>
            <person name="Nunes L.R."/>
            <person name="Oliveira R.C."/>
            <person name="Pereira G.G."/>
            <person name="Siqueira W."/>
            <person name="de Souza A.A."/>
            <person name="Tsai S.M."/>
            <person name="Zanca A.S."/>
            <person name="Simpson A.J.G."/>
            <person name="Brumbley S.M."/>
            <person name="Setubal J.C."/>
        </authorList>
    </citation>
    <scope>NUCLEOTIDE SEQUENCE [LARGE SCALE GENOMIC DNA]</scope>
    <source>
        <strain>CTCB07</strain>
    </source>
</reference>
<accession>Q6AEP2</accession>
<evidence type="ECO:0000255" key="1">
    <source>
        <dbReference type="HAMAP-Rule" id="MF_00435"/>
    </source>
</evidence>
<evidence type="ECO:0000255" key="2">
    <source>
        <dbReference type="PROSITE-ProRule" id="PRU01197"/>
    </source>
</evidence>
<evidence type="ECO:0000255" key="3">
    <source>
        <dbReference type="PROSITE-ProRule" id="PRU01198"/>
    </source>
</evidence>
<protein>
    <recommendedName>
        <fullName evidence="1">Ketol-acid reductoisomerase (NADP(+))</fullName>
        <shortName evidence="1">KARI</shortName>
        <ecNumber evidence="1">1.1.1.86</ecNumber>
    </recommendedName>
    <alternativeName>
        <fullName evidence="1">Acetohydroxy-acid isomeroreductase</fullName>
        <shortName evidence="1">AHIR</shortName>
    </alternativeName>
    <alternativeName>
        <fullName evidence="1">Alpha-keto-beta-hydroxylacyl reductoisomerase</fullName>
    </alternativeName>
    <alternativeName>
        <fullName evidence="1">Ketol-acid reductoisomerase type 1</fullName>
    </alternativeName>
    <alternativeName>
        <fullName evidence="1">Ketol-acid reductoisomerase type I</fullName>
    </alternativeName>
</protein>
<comment type="function">
    <text evidence="1">Involved in the biosynthesis of branched-chain amino acids (BCAA). Catalyzes an alkyl-migration followed by a ketol-acid reduction of (S)-2-acetolactate (S2AL) to yield (R)-2,3-dihydroxy-isovalerate. In the isomerase reaction, S2AL is rearranged via a Mg-dependent methyl migration to produce 3-hydroxy-3-methyl-2-ketobutyrate (HMKB). In the reductase reaction, this 2-ketoacid undergoes a metal-dependent reduction by NADPH to yield (R)-2,3-dihydroxy-isovalerate.</text>
</comment>
<comment type="catalytic activity">
    <reaction evidence="1">
        <text>(2R)-2,3-dihydroxy-3-methylbutanoate + NADP(+) = (2S)-2-acetolactate + NADPH + H(+)</text>
        <dbReference type="Rhea" id="RHEA:22068"/>
        <dbReference type="ChEBI" id="CHEBI:15378"/>
        <dbReference type="ChEBI" id="CHEBI:49072"/>
        <dbReference type="ChEBI" id="CHEBI:57783"/>
        <dbReference type="ChEBI" id="CHEBI:58349"/>
        <dbReference type="ChEBI" id="CHEBI:58476"/>
        <dbReference type="EC" id="1.1.1.86"/>
    </reaction>
</comment>
<comment type="catalytic activity">
    <reaction evidence="1">
        <text>(2R,3R)-2,3-dihydroxy-3-methylpentanoate + NADP(+) = (S)-2-ethyl-2-hydroxy-3-oxobutanoate + NADPH + H(+)</text>
        <dbReference type="Rhea" id="RHEA:13493"/>
        <dbReference type="ChEBI" id="CHEBI:15378"/>
        <dbReference type="ChEBI" id="CHEBI:49256"/>
        <dbReference type="ChEBI" id="CHEBI:49258"/>
        <dbReference type="ChEBI" id="CHEBI:57783"/>
        <dbReference type="ChEBI" id="CHEBI:58349"/>
        <dbReference type="EC" id="1.1.1.86"/>
    </reaction>
</comment>
<comment type="cofactor">
    <cofactor evidence="1">
        <name>Mg(2+)</name>
        <dbReference type="ChEBI" id="CHEBI:18420"/>
    </cofactor>
    <text evidence="1">Binds 2 magnesium ions per subunit.</text>
</comment>
<comment type="pathway">
    <text evidence="1">Amino-acid biosynthesis; L-isoleucine biosynthesis; L-isoleucine from 2-oxobutanoate: step 2/4.</text>
</comment>
<comment type="pathway">
    <text evidence="1">Amino-acid biosynthesis; L-valine biosynthesis; L-valine from pyruvate: step 2/4.</text>
</comment>
<comment type="similarity">
    <text evidence="1">Belongs to the ketol-acid reductoisomerase family.</text>
</comment>
<keyword id="KW-0028">Amino-acid biosynthesis</keyword>
<keyword id="KW-0100">Branched-chain amino acid biosynthesis</keyword>
<keyword id="KW-0460">Magnesium</keyword>
<keyword id="KW-0479">Metal-binding</keyword>
<keyword id="KW-0521">NADP</keyword>
<keyword id="KW-0560">Oxidoreductase</keyword>
<keyword id="KW-1185">Reference proteome</keyword>
<organism>
    <name type="scientific">Leifsonia xyli subsp. xyli (strain CTCB07)</name>
    <dbReference type="NCBI Taxonomy" id="281090"/>
    <lineage>
        <taxon>Bacteria</taxon>
        <taxon>Bacillati</taxon>
        <taxon>Actinomycetota</taxon>
        <taxon>Actinomycetes</taxon>
        <taxon>Micrococcales</taxon>
        <taxon>Microbacteriaceae</taxon>
        <taxon>Leifsonia</taxon>
    </lineage>
</organism>
<sequence length="342" mass="36974">MAEIYYDNDADLSIIQGKKVAVIGYGSQGHAHAQNLRDSGVEVVIGLKDGSKSTPKAEEAGFRVLSAAEAAQWADVVVILAPDQVQRTLYADDIRANLEAGNALVFGHGFNIRFGYIEAPEGVDVIMVAPKGPGHTVRREYEAGRGVPVIVAVEKDATGAAWPLVLSYAKGIGGLRAGGIKTTFTEETETDLFGEQAVLCGGVSQLVQYGFETLTEAGYQPQVAYFEVLHELKLIVDLMWEGGIAKQRWSVSDTAEYGDYVSGPRVIGPHVKENMKAVLSDIQDGTFAKRFIADQDAGAPEFLALRVKGEQHPIEATGRELRKLFAWNASNDDDYVDGEVAR</sequence>
<name>ILVC_LEIXX</name>
<feature type="chain" id="PRO_0000151319" description="Ketol-acid reductoisomerase (NADP(+))">
    <location>
        <begin position="1"/>
        <end position="342"/>
    </location>
</feature>
<feature type="domain" description="KARI N-terminal Rossmann" evidence="2">
    <location>
        <begin position="2"/>
        <end position="182"/>
    </location>
</feature>
<feature type="domain" description="KARI C-terminal knotted" evidence="3">
    <location>
        <begin position="183"/>
        <end position="328"/>
    </location>
</feature>
<feature type="active site" evidence="1">
    <location>
        <position position="108"/>
    </location>
</feature>
<feature type="binding site" evidence="1">
    <location>
        <begin position="25"/>
        <end position="28"/>
    </location>
    <ligand>
        <name>NADP(+)</name>
        <dbReference type="ChEBI" id="CHEBI:58349"/>
    </ligand>
</feature>
<feature type="binding site" evidence="1">
    <location>
        <position position="48"/>
    </location>
    <ligand>
        <name>NADP(+)</name>
        <dbReference type="ChEBI" id="CHEBI:58349"/>
    </ligand>
</feature>
<feature type="binding site" evidence="1">
    <location>
        <position position="51"/>
    </location>
    <ligand>
        <name>NADP(+)</name>
        <dbReference type="ChEBI" id="CHEBI:58349"/>
    </ligand>
</feature>
<feature type="binding site" evidence="1">
    <location>
        <position position="53"/>
    </location>
    <ligand>
        <name>NADP(+)</name>
        <dbReference type="ChEBI" id="CHEBI:58349"/>
    </ligand>
</feature>
<feature type="binding site" evidence="1">
    <location>
        <begin position="83"/>
        <end position="86"/>
    </location>
    <ligand>
        <name>NADP(+)</name>
        <dbReference type="ChEBI" id="CHEBI:58349"/>
    </ligand>
</feature>
<feature type="binding site" evidence="1">
    <location>
        <position position="134"/>
    </location>
    <ligand>
        <name>NADP(+)</name>
        <dbReference type="ChEBI" id="CHEBI:58349"/>
    </ligand>
</feature>
<feature type="binding site" evidence="1">
    <location>
        <position position="191"/>
    </location>
    <ligand>
        <name>Mg(2+)</name>
        <dbReference type="ChEBI" id="CHEBI:18420"/>
        <label>1</label>
    </ligand>
</feature>
<feature type="binding site" evidence="1">
    <location>
        <position position="191"/>
    </location>
    <ligand>
        <name>Mg(2+)</name>
        <dbReference type="ChEBI" id="CHEBI:18420"/>
        <label>2</label>
    </ligand>
</feature>
<feature type="binding site" evidence="1">
    <location>
        <position position="195"/>
    </location>
    <ligand>
        <name>Mg(2+)</name>
        <dbReference type="ChEBI" id="CHEBI:18420"/>
        <label>1</label>
    </ligand>
</feature>
<feature type="binding site" evidence="1">
    <location>
        <position position="227"/>
    </location>
    <ligand>
        <name>Mg(2+)</name>
        <dbReference type="ChEBI" id="CHEBI:18420"/>
        <label>2</label>
    </ligand>
</feature>
<feature type="binding site" evidence="1">
    <location>
        <position position="231"/>
    </location>
    <ligand>
        <name>Mg(2+)</name>
        <dbReference type="ChEBI" id="CHEBI:18420"/>
        <label>2</label>
    </ligand>
</feature>
<feature type="binding site" evidence="1">
    <location>
        <position position="252"/>
    </location>
    <ligand>
        <name>substrate</name>
    </ligand>
</feature>
<proteinExistence type="inferred from homology"/>